<sequence length="353" mass="40283">MLEKLMEVENKYEKITQTLSDPKVFSNKDEYMKYSREQAELEPIVTKFREYKRILKQIEEAEEMIKSGDPDLKELAEEELQQLKKIKPQIEQELKVLLLPKDPRDEKNVILEIRAGTGGEEAALFAANLFRMYAKYAESKGWKVEIIDSHPTGLGGFKEIIATISGKGAFSKLKYESGVHRVQRIPVTEASGRIHTSTATVAVLPEAEEVDIKIDEKDLRIDTFCSSGPGGQSVNTAYSAVRIVHIPTGIIVQCQDERSQIKNREKAMKVLRARLLEIERQKKEAERAAERKGQVGTGERSERIRTYNFPQNRVTDHRIGLTLYKLEQVLNGNIDEIIDALISYYQAEKLKEM</sequence>
<proteinExistence type="inferred from homology"/>
<name>RF1_THEYD</name>
<comment type="function">
    <text evidence="1">Peptide chain release factor 1 directs the termination of translation in response to the peptide chain termination codons UAG and UAA.</text>
</comment>
<comment type="subcellular location">
    <subcellularLocation>
        <location evidence="1">Cytoplasm</location>
    </subcellularLocation>
</comment>
<comment type="PTM">
    <text evidence="1">Methylated by PrmC. Methylation increases the termination efficiency of RF1.</text>
</comment>
<comment type="similarity">
    <text evidence="1">Belongs to the prokaryotic/mitochondrial release factor family.</text>
</comment>
<dbReference type="EMBL" id="CP001147">
    <property type="protein sequence ID" value="ACI21157.1"/>
    <property type="molecule type" value="Genomic_DNA"/>
</dbReference>
<dbReference type="RefSeq" id="WP_012545879.1">
    <property type="nucleotide sequence ID" value="NC_011296.1"/>
</dbReference>
<dbReference type="RefSeq" id="YP_002248216.1">
    <property type="nucleotide sequence ID" value="NC_011296.1"/>
</dbReference>
<dbReference type="SMR" id="B5YIQ7"/>
<dbReference type="FunCoup" id="B5YIQ7">
    <property type="interactions" value="382"/>
</dbReference>
<dbReference type="STRING" id="289376.THEYE_A0369"/>
<dbReference type="EnsemblBacteria" id="ACI21157">
    <property type="protein sequence ID" value="ACI21157"/>
    <property type="gene ID" value="THEYE_A0369"/>
</dbReference>
<dbReference type="KEGG" id="tye:THEYE_A0369"/>
<dbReference type="PATRIC" id="fig|289376.4.peg.362"/>
<dbReference type="eggNOG" id="COG0216">
    <property type="taxonomic scope" value="Bacteria"/>
</dbReference>
<dbReference type="HOGENOM" id="CLU_036856_0_1_0"/>
<dbReference type="InParanoid" id="B5YIQ7"/>
<dbReference type="OrthoDB" id="9806673at2"/>
<dbReference type="Proteomes" id="UP000000718">
    <property type="component" value="Chromosome"/>
</dbReference>
<dbReference type="GO" id="GO:0005737">
    <property type="term" value="C:cytoplasm"/>
    <property type="evidence" value="ECO:0007669"/>
    <property type="project" value="UniProtKB-SubCell"/>
</dbReference>
<dbReference type="GO" id="GO:0016149">
    <property type="term" value="F:translation release factor activity, codon specific"/>
    <property type="evidence" value="ECO:0007669"/>
    <property type="project" value="UniProtKB-UniRule"/>
</dbReference>
<dbReference type="FunFam" id="3.30.160.20:FF:000004">
    <property type="entry name" value="Peptide chain release factor 1"/>
    <property type="match status" value="1"/>
</dbReference>
<dbReference type="FunFam" id="3.30.70.1660:FF:000002">
    <property type="entry name" value="Peptide chain release factor 1"/>
    <property type="match status" value="1"/>
</dbReference>
<dbReference type="FunFam" id="3.30.70.1660:FF:000004">
    <property type="entry name" value="Peptide chain release factor 1"/>
    <property type="match status" value="1"/>
</dbReference>
<dbReference type="Gene3D" id="3.30.160.20">
    <property type="match status" value="1"/>
</dbReference>
<dbReference type="Gene3D" id="3.30.70.1660">
    <property type="match status" value="1"/>
</dbReference>
<dbReference type="Gene3D" id="6.10.140.1950">
    <property type="match status" value="1"/>
</dbReference>
<dbReference type="HAMAP" id="MF_00093">
    <property type="entry name" value="Rel_fac_1"/>
    <property type="match status" value="1"/>
</dbReference>
<dbReference type="InterPro" id="IPR005139">
    <property type="entry name" value="PCRF"/>
</dbReference>
<dbReference type="InterPro" id="IPR000352">
    <property type="entry name" value="Pep_chain_release_fac_I"/>
</dbReference>
<dbReference type="InterPro" id="IPR045853">
    <property type="entry name" value="Pep_chain_release_fac_I_sf"/>
</dbReference>
<dbReference type="InterPro" id="IPR050057">
    <property type="entry name" value="Prokaryotic/Mito_RF"/>
</dbReference>
<dbReference type="InterPro" id="IPR004373">
    <property type="entry name" value="RF-1"/>
</dbReference>
<dbReference type="NCBIfam" id="TIGR00019">
    <property type="entry name" value="prfA"/>
    <property type="match status" value="1"/>
</dbReference>
<dbReference type="NCBIfam" id="NF001859">
    <property type="entry name" value="PRK00591.1"/>
    <property type="match status" value="1"/>
</dbReference>
<dbReference type="PANTHER" id="PTHR43804">
    <property type="entry name" value="LD18447P"/>
    <property type="match status" value="1"/>
</dbReference>
<dbReference type="PANTHER" id="PTHR43804:SF7">
    <property type="entry name" value="LD18447P"/>
    <property type="match status" value="1"/>
</dbReference>
<dbReference type="Pfam" id="PF03462">
    <property type="entry name" value="PCRF"/>
    <property type="match status" value="1"/>
</dbReference>
<dbReference type="Pfam" id="PF00472">
    <property type="entry name" value="RF-1"/>
    <property type="match status" value="1"/>
</dbReference>
<dbReference type="SMART" id="SM00937">
    <property type="entry name" value="PCRF"/>
    <property type="match status" value="1"/>
</dbReference>
<dbReference type="SUPFAM" id="SSF75620">
    <property type="entry name" value="Release factor"/>
    <property type="match status" value="1"/>
</dbReference>
<organism>
    <name type="scientific">Thermodesulfovibrio yellowstonii (strain ATCC 51303 / DSM 11347 / YP87)</name>
    <dbReference type="NCBI Taxonomy" id="289376"/>
    <lineage>
        <taxon>Bacteria</taxon>
        <taxon>Pseudomonadati</taxon>
        <taxon>Nitrospirota</taxon>
        <taxon>Thermodesulfovibrionia</taxon>
        <taxon>Thermodesulfovibrionales</taxon>
        <taxon>Thermodesulfovibrionaceae</taxon>
        <taxon>Thermodesulfovibrio</taxon>
    </lineage>
</organism>
<reference key="1">
    <citation type="submission" date="2008-08" db="EMBL/GenBank/DDBJ databases">
        <title>The complete genome sequence of Thermodesulfovibrio yellowstonii strain ATCC 51303 / DSM 11347 / YP87.</title>
        <authorList>
            <person name="Dodson R.J."/>
            <person name="Durkin A.S."/>
            <person name="Wu M."/>
            <person name="Eisen J."/>
            <person name="Sutton G."/>
        </authorList>
    </citation>
    <scope>NUCLEOTIDE SEQUENCE [LARGE SCALE GENOMIC DNA]</scope>
    <source>
        <strain>ATCC 51303 / DSM 11347 / YP87</strain>
    </source>
</reference>
<evidence type="ECO:0000255" key="1">
    <source>
        <dbReference type="HAMAP-Rule" id="MF_00093"/>
    </source>
</evidence>
<accession>B5YIQ7</accession>
<feature type="chain" id="PRO_1000093518" description="Peptide chain release factor 1">
    <location>
        <begin position="1"/>
        <end position="353"/>
    </location>
</feature>
<feature type="modified residue" description="N5-methylglutamine" evidence="1">
    <location>
        <position position="232"/>
    </location>
</feature>
<protein>
    <recommendedName>
        <fullName evidence="1">Peptide chain release factor 1</fullName>
        <shortName evidence="1">RF-1</shortName>
    </recommendedName>
</protein>
<keyword id="KW-0963">Cytoplasm</keyword>
<keyword id="KW-0488">Methylation</keyword>
<keyword id="KW-0648">Protein biosynthesis</keyword>
<keyword id="KW-1185">Reference proteome</keyword>
<gene>
    <name evidence="1" type="primary">prfA</name>
    <name type="ordered locus">THEYE_A0369</name>
</gene>